<accession>Q5HUW5</accession>
<sequence>MSLENFGNFLTLDEKHSFIKKYFKEFYTKDFKLFASKDKHYRTRAELSFYHENDTLFYAMFDPKNKKKYIIKYLDFADEKICTFMPKLLEYLRQDNKLKEKLFGVEFLTTKQELSVTLLYHKNIEDIKSNLENLSNILHINLIARSKGKKLIFKTENLRQTLNIQGRKIFYEFNNDCFIQPNTTINEKMITWVCEILNTQKRMDLLELYCGYGNFTLALAPFFFKVLATEISKSNINFALKNCELNNTTNIHFARLSSEELSLAIKKEREFFRLKDIRLDDFNFSHVLVDPPRAGLDKSVIDLIKKYENIIYISCNPITLKENLKELSLTHRVEEFALFDQFVNTPHLECGVFLSKV</sequence>
<evidence type="ECO:0000255" key="1">
    <source>
        <dbReference type="HAMAP-Rule" id="MF_01011"/>
    </source>
</evidence>
<proteinExistence type="inferred from homology"/>
<dbReference type="EC" id="2.1.1.-" evidence="1"/>
<dbReference type="EC" id="2.1.1.35" evidence="1"/>
<dbReference type="EMBL" id="CP000025">
    <property type="protein sequence ID" value="AAW35255.1"/>
    <property type="molecule type" value="Genomic_DNA"/>
</dbReference>
<dbReference type="RefSeq" id="WP_002874176.1">
    <property type="nucleotide sequence ID" value="NC_003912.7"/>
</dbReference>
<dbReference type="SMR" id="Q5HUW5"/>
<dbReference type="KEGG" id="cjr:CJE0918"/>
<dbReference type="HOGENOM" id="CLU_043022_1_0_7"/>
<dbReference type="GO" id="GO:0005829">
    <property type="term" value="C:cytosol"/>
    <property type="evidence" value="ECO:0007669"/>
    <property type="project" value="TreeGrafter"/>
</dbReference>
<dbReference type="GO" id="GO:0019843">
    <property type="term" value="F:rRNA binding"/>
    <property type="evidence" value="ECO:0007669"/>
    <property type="project" value="TreeGrafter"/>
</dbReference>
<dbReference type="GO" id="GO:0030697">
    <property type="term" value="F:tRNA (uracil(54)-C5)-methyltransferase activity, S-adenosyl methionine-dependent"/>
    <property type="evidence" value="ECO:0007669"/>
    <property type="project" value="UniProtKB-EC"/>
</dbReference>
<dbReference type="GO" id="GO:0000049">
    <property type="term" value="F:tRNA binding"/>
    <property type="evidence" value="ECO:0007669"/>
    <property type="project" value="TreeGrafter"/>
</dbReference>
<dbReference type="GO" id="GO:0032259">
    <property type="term" value="P:methylation"/>
    <property type="evidence" value="ECO:0007669"/>
    <property type="project" value="UniProtKB-KW"/>
</dbReference>
<dbReference type="GO" id="GO:0008033">
    <property type="term" value="P:tRNA processing"/>
    <property type="evidence" value="ECO:0007669"/>
    <property type="project" value="UniProtKB-KW"/>
</dbReference>
<dbReference type="CDD" id="cd02440">
    <property type="entry name" value="AdoMet_MTases"/>
    <property type="match status" value="1"/>
</dbReference>
<dbReference type="FunFam" id="3.40.50.150:FF:000012">
    <property type="entry name" value="tRNA/tmRNA (uracil-C(5))-methyltransferase"/>
    <property type="match status" value="1"/>
</dbReference>
<dbReference type="Gene3D" id="2.40.50.1070">
    <property type="match status" value="1"/>
</dbReference>
<dbReference type="Gene3D" id="3.40.50.150">
    <property type="entry name" value="Vaccinia Virus protein VP39"/>
    <property type="match status" value="1"/>
</dbReference>
<dbReference type="HAMAP" id="MF_01011">
    <property type="entry name" value="RNA_methyltr_TrmA"/>
    <property type="match status" value="1"/>
</dbReference>
<dbReference type="InterPro" id="IPR030390">
    <property type="entry name" value="MeTrfase_TrmA_AS"/>
</dbReference>
<dbReference type="InterPro" id="IPR029063">
    <property type="entry name" value="SAM-dependent_MTases_sf"/>
</dbReference>
<dbReference type="InterPro" id="IPR011869">
    <property type="entry name" value="TrmA_MeTrfase"/>
</dbReference>
<dbReference type="InterPro" id="IPR010280">
    <property type="entry name" value="U5_MeTrfase_fam"/>
</dbReference>
<dbReference type="NCBIfam" id="TIGR02143">
    <property type="entry name" value="trmA_only"/>
    <property type="match status" value="1"/>
</dbReference>
<dbReference type="PANTHER" id="PTHR47790">
    <property type="entry name" value="TRNA/TMRNA (URACIL-C(5))-METHYLTRANSFERASE"/>
    <property type="match status" value="1"/>
</dbReference>
<dbReference type="PANTHER" id="PTHR47790:SF2">
    <property type="entry name" value="TRNA_TMRNA (URACIL-C(5))-METHYLTRANSFERASE"/>
    <property type="match status" value="1"/>
</dbReference>
<dbReference type="Pfam" id="PF05958">
    <property type="entry name" value="tRNA_U5-meth_tr"/>
    <property type="match status" value="1"/>
</dbReference>
<dbReference type="SUPFAM" id="SSF53335">
    <property type="entry name" value="S-adenosyl-L-methionine-dependent methyltransferases"/>
    <property type="match status" value="1"/>
</dbReference>
<dbReference type="PROSITE" id="PS51687">
    <property type="entry name" value="SAM_MT_RNA_M5U"/>
    <property type="match status" value="1"/>
</dbReference>
<dbReference type="PROSITE" id="PS01230">
    <property type="entry name" value="TRMA_1"/>
    <property type="match status" value="1"/>
</dbReference>
<feature type="chain" id="PRO_0000281436" description="tRNA/tmRNA (uracil-C(5))-methyltransferase">
    <location>
        <begin position="1"/>
        <end position="357"/>
    </location>
</feature>
<feature type="active site" description="Nucleophile" evidence="1">
    <location>
        <position position="315"/>
    </location>
</feature>
<feature type="active site" description="Proton acceptor" evidence="1">
    <location>
        <position position="349"/>
    </location>
</feature>
<feature type="binding site" evidence="1">
    <location>
        <position position="180"/>
    </location>
    <ligand>
        <name>S-adenosyl-L-methionine</name>
        <dbReference type="ChEBI" id="CHEBI:59789"/>
    </ligand>
</feature>
<feature type="binding site" evidence="1">
    <location>
        <position position="209"/>
    </location>
    <ligand>
        <name>S-adenosyl-L-methionine</name>
        <dbReference type="ChEBI" id="CHEBI:59789"/>
    </ligand>
</feature>
<feature type="binding site" evidence="1">
    <location>
        <position position="214"/>
    </location>
    <ligand>
        <name>S-adenosyl-L-methionine</name>
        <dbReference type="ChEBI" id="CHEBI:59789"/>
    </ligand>
</feature>
<feature type="binding site" evidence="1">
    <location>
        <position position="230"/>
    </location>
    <ligand>
        <name>S-adenosyl-L-methionine</name>
        <dbReference type="ChEBI" id="CHEBI:59789"/>
    </ligand>
</feature>
<feature type="binding site" evidence="1">
    <location>
        <position position="290"/>
    </location>
    <ligand>
        <name>S-adenosyl-L-methionine</name>
        <dbReference type="ChEBI" id="CHEBI:59789"/>
    </ligand>
</feature>
<gene>
    <name evidence="1" type="primary">trmA</name>
    <name type="ordered locus">CJE0918</name>
</gene>
<protein>
    <recommendedName>
        <fullName evidence="1">tRNA/tmRNA (uracil-C(5))-methyltransferase</fullName>
        <ecNumber evidence="1">2.1.1.-</ecNumber>
        <ecNumber evidence="1">2.1.1.35</ecNumber>
    </recommendedName>
    <alternativeName>
        <fullName evidence="1">tRNA (uracil(54)-C(5))-methyltransferase</fullName>
    </alternativeName>
    <alternativeName>
        <fullName evidence="1">tRNA(m5U54)-methyltransferase</fullName>
        <shortName evidence="1">RUMT</shortName>
    </alternativeName>
    <alternativeName>
        <fullName evidence="1">tmRNA (uracil(341)-C(5))-methyltransferase</fullName>
    </alternativeName>
</protein>
<name>TRMA_CAMJR</name>
<reference key="1">
    <citation type="journal article" date="2005" name="PLoS Biol.">
        <title>Major structural differences and novel potential virulence mechanisms from the genomes of multiple Campylobacter species.</title>
        <authorList>
            <person name="Fouts D.E."/>
            <person name="Mongodin E.F."/>
            <person name="Mandrell R.E."/>
            <person name="Miller W.G."/>
            <person name="Rasko D.A."/>
            <person name="Ravel J."/>
            <person name="Brinkac L.M."/>
            <person name="DeBoy R.T."/>
            <person name="Parker C.T."/>
            <person name="Daugherty S.C."/>
            <person name="Dodson R.J."/>
            <person name="Durkin A.S."/>
            <person name="Madupu R."/>
            <person name="Sullivan S.A."/>
            <person name="Shetty J.U."/>
            <person name="Ayodeji M.A."/>
            <person name="Shvartsbeyn A."/>
            <person name="Schatz M.C."/>
            <person name="Badger J.H."/>
            <person name="Fraser C.M."/>
            <person name="Nelson K.E."/>
        </authorList>
    </citation>
    <scope>NUCLEOTIDE SEQUENCE [LARGE SCALE GENOMIC DNA]</scope>
    <source>
        <strain>RM1221</strain>
    </source>
</reference>
<comment type="function">
    <text evidence="1">Dual-specificity methyltransferase that catalyzes the formation of 5-methyluridine at position 54 (m5U54) in all tRNAs, and that of position 341 (m5U341) in tmRNA (transfer-mRNA).</text>
</comment>
<comment type="catalytic activity">
    <reaction evidence="1">
        <text>uridine(54) in tRNA + S-adenosyl-L-methionine = 5-methyluridine(54) in tRNA + S-adenosyl-L-homocysteine + H(+)</text>
        <dbReference type="Rhea" id="RHEA:42712"/>
        <dbReference type="Rhea" id="RHEA-COMP:10167"/>
        <dbReference type="Rhea" id="RHEA-COMP:10193"/>
        <dbReference type="ChEBI" id="CHEBI:15378"/>
        <dbReference type="ChEBI" id="CHEBI:57856"/>
        <dbReference type="ChEBI" id="CHEBI:59789"/>
        <dbReference type="ChEBI" id="CHEBI:65315"/>
        <dbReference type="ChEBI" id="CHEBI:74447"/>
        <dbReference type="EC" id="2.1.1.35"/>
    </reaction>
</comment>
<comment type="catalytic activity">
    <reaction evidence="1">
        <text>uridine(341) in tmRNA + S-adenosyl-L-methionine = 5-methyluridine(341) in tmRNA + S-adenosyl-L-homocysteine + H(+)</text>
        <dbReference type="Rhea" id="RHEA:43612"/>
        <dbReference type="Rhea" id="RHEA-COMP:10630"/>
        <dbReference type="Rhea" id="RHEA-COMP:10631"/>
        <dbReference type="ChEBI" id="CHEBI:15378"/>
        <dbReference type="ChEBI" id="CHEBI:57856"/>
        <dbReference type="ChEBI" id="CHEBI:59789"/>
        <dbReference type="ChEBI" id="CHEBI:65315"/>
        <dbReference type="ChEBI" id="CHEBI:74447"/>
    </reaction>
</comment>
<comment type="similarity">
    <text evidence="1">Belongs to the class I-like SAM-binding methyltransferase superfamily. RNA M5U methyltransferase family. TrmA subfamily.</text>
</comment>
<organism>
    <name type="scientific">Campylobacter jejuni (strain RM1221)</name>
    <dbReference type="NCBI Taxonomy" id="195099"/>
    <lineage>
        <taxon>Bacteria</taxon>
        <taxon>Pseudomonadati</taxon>
        <taxon>Campylobacterota</taxon>
        <taxon>Epsilonproteobacteria</taxon>
        <taxon>Campylobacterales</taxon>
        <taxon>Campylobacteraceae</taxon>
        <taxon>Campylobacter</taxon>
    </lineage>
</organism>
<keyword id="KW-0489">Methyltransferase</keyword>
<keyword id="KW-0949">S-adenosyl-L-methionine</keyword>
<keyword id="KW-0808">Transferase</keyword>
<keyword id="KW-0819">tRNA processing</keyword>